<comment type="function">
    <text evidence="5">Effector that enhances P.infestans colonization of Nicotiana benthamiana leaves.</text>
</comment>
<comment type="subcellular location">
    <subcellularLocation>
        <location evidence="5">Secreted</location>
    </subcellularLocation>
    <subcellularLocation>
        <location evidence="5">Host nucleus</location>
    </subcellularLocation>
</comment>
<comment type="induction">
    <text evidence="2 3 4">Expression is induced during host plant infection.</text>
</comment>
<comment type="domain">
    <text evidence="8">The RxLR-dEER motif acts to carry the protein into the host cell cytoplasm through binding to cell surface phosphatidylinositol-3-phosphate.</text>
</comment>
<comment type="similarity">
    <text evidence="7">Belongs to the RxLR effector family.</text>
</comment>
<organism>
    <name type="scientific">Phytophthora infestans (strain T30-4)</name>
    <name type="common">Potato late blight agent</name>
    <dbReference type="NCBI Taxonomy" id="403677"/>
    <lineage>
        <taxon>Eukaryota</taxon>
        <taxon>Sar</taxon>
        <taxon>Stramenopiles</taxon>
        <taxon>Oomycota</taxon>
        <taxon>Peronosporales</taxon>
        <taxon>Peronosporaceae</taxon>
        <taxon>Phytophthora</taxon>
    </lineage>
</organism>
<dbReference type="EMBL" id="DS028152">
    <property type="protein sequence ID" value="EEY62855.1"/>
    <property type="molecule type" value="Genomic_DNA"/>
</dbReference>
<dbReference type="RefSeq" id="XP_002898730.1">
    <property type="nucleotide sequence ID" value="XM_002898684.1"/>
</dbReference>
<dbReference type="STRING" id="403677.D0NQC3"/>
<dbReference type="EnsemblProtists" id="PITG_15287T0">
    <property type="protein sequence ID" value="PITG_15287T0"/>
    <property type="gene ID" value="PITG_15287"/>
</dbReference>
<dbReference type="GeneID" id="9479257"/>
<dbReference type="KEGG" id="pif:PITG_15287"/>
<dbReference type="VEuPathDB" id="FungiDB:PITG_15287"/>
<dbReference type="eggNOG" id="ENOG502RFCW">
    <property type="taxonomic scope" value="Eukaryota"/>
</dbReference>
<dbReference type="HOGENOM" id="CLU_114744_0_0_1"/>
<dbReference type="InParanoid" id="D0NQC3"/>
<dbReference type="OMA" id="QDTAHED"/>
<dbReference type="OrthoDB" id="120974at2759"/>
<dbReference type="Proteomes" id="UP000006643">
    <property type="component" value="Partially assembled WGS sequence"/>
</dbReference>
<dbReference type="GO" id="GO:0005576">
    <property type="term" value="C:extracellular region"/>
    <property type="evidence" value="ECO:0007669"/>
    <property type="project" value="UniProtKB-SubCell"/>
</dbReference>
<dbReference type="GO" id="GO:0042025">
    <property type="term" value="C:host cell nucleus"/>
    <property type="evidence" value="ECO:0007669"/>
    <property type="project" value="UniProtKB-SubCell"/>
</dbReference>
<accession>D0NQC3</accession>
<evidence type="ECO:0000255" key="1"/>
<evidence type="ECO:0000269" key="2">
    <source>
    </source>
</evidence>
<evidence type="ECO:0000269" key="3">
    <source>
    </source>
</evidence>
<evidence type="ECO:0000269" key="4">
    <source>
    </source>
</evidence>
<evidence type="ECO:0000269" key="5">
    <source>
    </source>
</evidence>
<evidence type="ECO:0000303" key="6">
    <source>
    </source>
</evidence>
<evidence type="ECO:0000305" key="7"/>
<evidence type="ECO:0000305" key="8">
    <source>
    </source>
</evidence>
<name>RD1_PHYIT</name>
<feature type="signal peptide" evidence="1">
    <location>
        <begin position="1"/>
        <end position="19"/>
    </location>
</feature>
<feature type="chain" id="PRO_5003013584" description="RxLR effector protein PexRD1">
    <location>
        <begin position="20"/>
        <end position="213"/>
    </location>
</feature>
<feature type="short sequence motif" description="RxLR-dEER" evidence="8">
    <location>
        <begin position="50"/>
        <end position="77"/>
    </location>
</feature>
<proteinExistence type="evidence at transcript level"/>
<keyword id="KW-1048">Host nucleus</keyword>
<keyword id="KW-1185">Reference proteome</keyword>
<keyword id="KW-0964">Secreted</keyword>
<keyword id="KW-0732">Signal</keyword>
<keyword id="KW-0843">Virulence</keyword>
<sequence>MRACNTLLPTAIVLTSCDALSAHRAQIMNVATSDLISPIESTVQDDNYDRQLRGFYATENTDPVNNQDTAHEDGEERVNVATVLGKGDEAWDDALMRLAYQHWFDGGKTSDGMRLIMDLPAKGEALRHPNWGKYIKYLEFVKEKKKEAADAAAVAALKRRRTYRGWYVDGKTEKDVRKIFGLPATGKAKNHPNWADFQEYLNVVREYSKVVFK</sequence>
<reference key="1">
    <citation type="journal article" date="2009" name="Nature">
        <title>Genome sequence and analysis of the Irish potato famine pathogen Phytophthora infestans.</title>
        <authorList>
            <consortium name="The Broad Institute Genome Sequencing Platform"/>
            <person name="Haas B.J."/>
            <person name="Kamoun S."/>
            <person name="Zody M.C."/>
            <person name="Jiang R.H."/>
            <person name="Handsaker R.E."/>
            <person name="Cano L.M."/>
            <person name="Grabherr M."/>
            <person name="Kodira C.D."/>
            <person name="Raffaele S."/>
            <person name="Torto-Alalibo T."/>
            <person name="Bozkurt T.O."/>
            <person name="Ah-Fong A.M."/>
            <person name="Alvarado L."/>
            <person name="Anderson V.L."/>
            <person name="Armstrong M.R."/>
            <person name="Avrova A."/>
            <person name="Baxter L."/>
            <person name="Beynon J."/>
            <person name="Boevink P.C."/>
            <person name="Bollmann S.R."/>
            <person name="Bos J.I."/>
            <person name="Bulone V."/>
            <person name="Cai G."/>
            <person name="Cakir C."/>
            <person name="Carrington J.C."/>
            <person name="Chawner M."/>
            <person name="Conti L."/>
            <person name="Costanzo S."/>
            <person name="Ewan R."/>
            <person name="Fahlgren N."/>
            <person name="Fischbach M.A."/>
            <person name="Fugelstad J."/>
            <person name="Gilroy E.M."/>
            <person name="Gnerre S."/>
            <person name="Green P.J."/>
            <person name="Grenville-Briggs L.J."/>
            <person name="Griffith J."/>
            <person name="Grunwald N.J."/>
            <person name="Horn K."/>
            <person name="Horner N.R."/>
            <person name="Hu C.H."/>
            <person name="Huitema E."/>
            <person name="Jeong D.H."/>
            <person name="Jones A.M."/>
            <person name="Jones J.D."/>
            <person name="Jones R.W."/>
            <person name="Karlsson E.K."/>
            <person name="Kunjeti S.G."/>
            <person name="Lamour K."/>
            <person name="Liu Z."/>
            <person name="Ma L."/>
            <person name="Maclean D."/>
            <person name="Chibucos M.C."/>
            <person name="McDonald H."/>
            <person name="McWalters J."/>
            <person name="Meijer H.J."/>
            <person name="Morgan W."/>
            <person name="Morris P.F."/>
            <person name="Munro C.A."/>
            <person name="O'Neill K."/>
            <person name="Ospina-Giraldo M."/>
            <person name="Pinzon A."/>
            <person name="Pritchard L."/>
            <person name="Ramsahoye B."/>
            <person name="Ren Q."/>
            <person name="Restrepo S."/>
            <person name="Roy S."/>
            <person name="Sadanandom A."/>
            <person name="Savidor A."/>
            <person name="Schornack S."/>
            <person name="Schwartz D.C."/>
            <person name="Schumann U.D."/>
            <person name="Schwessinger B."/>
            <person name="Seyer L."/>
            <person name="Sharpe T."/>
            <person name="Silvar C."/>
            <person name="Song J."/>
            <person name="Studholme D.J."/>
            <person name="Sykes S."/>
            <person name="Thines M."/>
            <person name="van de Vondervoort P.J."/>
            <person name="Phuntumart V."/>
            <person name="Wawra S."/>
            <person name="Weide R."/>
            <person name="Win J."/>
            <person name="Young C."/>
            <person name="Zhou S."/>
            <person name="Fry W."/>
            <person name="Meyers B.C."/>
            <person name="van West P."/>
            <person name="Ristaino J."/>
            <person name="Govers F."/>
            <person name="Birch P.R."/>
            <person name="Whisson S.C."/>
            <person name="Judelson H.S."/>
            <person name="Nusbaum C."/>
        </authorList>
    </citation>
    <scope>NUCLEOTIDE SEQUENCE [LARGE SCALE GENOMIC DNA]</scope>
    <source>
        <strain>T30-4</strain>
    </source>
</reference>
<reference key="2">
    <citation type="journal article" date="2007" name="Nature">
        <title>A translocation signal for delivery of oomycete effector proteins into host plant cells.</title>
        <authorList>
            <person name="Whisson S.C."/>
            <person name="Boevink P.C."/>
            <person name="Moleleki L."/>
            <person name="Avrova A.O."/>
            <person name="Morales J.G."/>
            <person name="Gilroy E.M."/>
            <person name="Armstrong M.R."/>
            <person name="Grouffaud S."/>
            <person name="van West P."/>
            <person name="Chapman S."/>
            <person name="Hein I."/>
            <person name="Toth I.K."/>
            <person name="Pritchard L."/>
            <person name="Birch P.R."/>
        </authorList>
    </citation>
    <scope>INDUCTION</scope>
    <scope>DOMAIN</scope>
</reference>
<reference key="3">
    <citation type="journal article" date="2009" name="Plant Cell">
        <title>In planta expression screens of Phytophthora infestans RXLR effectors reveal diverse phenotypes, including activation of the Solanum bulbocastanum disease resistance protein Rpi-blb2.</title>
        <authorList>
            <person name="Oh S.K."/>
            <person name="Young C."/>
            <person name="Lee M."/>
            <person name="Oliva R."/>
            <person name="Bozkurt T.O."/>
            <person name="Cano L.M."/>
            <person name="Win J."/>
            <person name="Bos J.I."/>
            <person name="Liu H.Y."/>
            <person name="van Damme M."/>
            <person name="Morgan W."/>
            <person name="Choi D."/>
            <person name="Van der Vossen E.A."/>
            <person name="Vleeshouwers V.G."/>
            <person name="Kamoun S."/>
        </authorList>
    </citation>
    <scope>INDUCTION</scope>
</reference>
<reference key="4">
    <citation type="journal article" date="2017" name="Front. Plant Sci.">
        <title>Conserved RXLR effector genes of Phytophthora infestans expressed at the early stage of potato infection are suppressive to host defense.</title>
        <authorList>
            <person name="Yin J."/>
            <person name="Gu B."/>
            <person name="Huang G."/>
            <person name="Tian Y."/>
            <person name="Quan J."/>
            <person name="Lindqvist-Kreuze H."/>
            <person name="Shan W."/>
        </authorList>
    </citation>
    <scope>INDUCTION</scope>
</reference>
<reference key="5">
    <citation type="journal article" date="2019" name="J. Exp. Bot.">
        <title>Phytophthora infestans RXLR effectors act in concert at diverse subcellular locations to enhance host colonization.</title>
        <authorList>
            <person name="Wang S."/>
            <person name="McLellan H."/>
            <person name="Bukharova T."/>
            <person name="He Q."/>
            <person name="Murphy F."/>
            <person name="Shi J."/>
            <person name="Sun S."/>
            <person name="van Weymers P."/>
            <person name="Ren Y."/>
            <person name="Thilliez G."/>
            <person name="Wang H."/>
            <person name="Chen X."/>
            <person name="Engelhardt S."/>
            <person name="Vleeshouwers V."/>
            <person name="Gilroy E.M."/>
            <person name="Whisson S.C."/>
            <person name="Hein I."/>
            <person name="Wang X."/>
            <person name="Tian Z."/>
            <person name="Birch P.R.J."/>
            <person name="Boevink P.C."/>
        </authorList>
    </citation>
    <scope>FUNCTION</scope>
    <scope>SUBCELLULAR LOCATION</scope>
</reference>
<gene>
    <name evidence="6" type="primary">PexRD1</name>
    <name type="ORF">PITG_15287</name>
</gene>
<protein>
    <recommendedName>
        <fullName evidence="6">RxLR effector protein PexRD1</fullName>
    </recommendedName>
</protein>